<accession>A8M6L1</accession>
<feature type="chain" id="PRO_1000128556" description="Small ribosomal subunit protein uS14A">
    <location>
        <begin position="1"/>
        <end position="101"/>
    </location>
</feature>
<evidence type="ECO:0000255" key="1">
    <source>
        <dbReference type="HAMAP-Rule" id="MF_00537"/>
    </source>
</evidence>
<evidence type="ECO:0000305" key="2"/>
<comment type="function">
    <text evidence="1">Binds 16S rRNA, required for the assembly of 30S particles and may also be responsible for determining the conformation of the 16S rRNA at the A site.</text>
</comment>
<comment type="subunit">
    <text evidence="1">Part of the 30S ribosomal subunit. Contacts proteins S3 and S10.</text>
</comment>
<comment type="similarity">
    <text evidence="1">Belongs to the universal ribosomal protein uS14 family.</text>
</comment>
<organism>
    <name type="scientific">Salinispora arenicola (strain CNS-205)</name>
    <dbReference type="NCBI Taxonomy" id="391037"/>
    <lineage>
        <taxon>Bacteria</taxon>
        <taxon>Bacillati</taxon>
        <taxon>Actinomycetota</taxon>
        <taxon>Actinomycetes</taxon>
        <taxon>Micromonosporales</taxon>
        <taxon>Micromonosporaceae</taxon>
        <taxon>Salinispora</taxon>
    </lineage>
</organism>
<reference key="1">
    <citation type="submission" date="2007-10" db="EMBL/GenBank/DDBJ databases">
        <title>Complete sequence of Salinispora arenicola CNS-205.</title>
        <authorList>
            <consortium name="US DOE Joint Genome Institute"/>
            <person name="Copeland A."/>
            <person name="Lucas S."/>
            <person name="Lapidus A."/>
            <person name="Barry K."/>
            <person name="Glavina del Rio T."/>
            <person name="Dalin E."/>
            <person name="Tice H."/>
            <person name="Pitluck S."/>
            <person name="Foster B."/>
            <person name="Schmutz J."/>
            <person name="Larimer F."/>
            <person name="Land M."/>
            <person name="Hauser L."/>
            <person name="Kyrpides N."/>
            <person name="Ivanova N."/>
            <person name="Jensen P.R."/>
            <person name="Moore B.S."/>
            <person name="Penn K."/>
            <person name="Jenkins C."/>
            <person name="Udwary D."/>
            <person name="Xiang L."/>
            <person name="Gontang E."/>
            <person name="Richardson P."/>
        </authorList>
    </citation>
    <scope>NUCLEOTIDE SEQUENCE [LARGE SCALE GENOMIC DNA]</scope>
    <source>
        <strain>CNS-205</strain>
    </source>
</reference>
<dbReference type="EMBL" id="CP000850">
    <property type="protein sequence ID" value="ABV98731.1"/>
    <property type="molecule type" value="Genomic_DNA"/>
</dbReference>
<dbReference type="SMR" id="A8M6L1"/>
<dbReference type="STRING" id="391037.Sare_2905"/>
<dbReference type="KEGG" id="saq:Sare_2905"/>
<dbReference type="PATRIC" id="fig|391037.6.peg.2937"/>
<dbReference type="eggNOG" id="COG0199">
    <property type="taxonomic scope" value="Bacteria"/>
</dbReference>
<dbReference type="HOGENOM" id="CLU_139869_0_1_11"/>
<dbReference type="OrthoDB" id="9810484at2"/>
<dbReference type="GO" id="GO:0015935">
    <property type="term" value="C:small ribosomal subunit"/>
    <property type="evidence" value="ECO:0007669"/>
    <property type="project" value="TreeGrafter"/>
</dbReference>
<dbReference type="GO" id="GO:0019843">
    <property type="term" value="F:rRNA binding"/>
    <property type="evidence" value="ECO:0007669"/>
    <property type="project" value="UniProtKB-UniRule"/>
</dbReference>
<dbReference type="GO" id="GO:0003735">
    <property type="term" value="F:structural constituent of ribosome"/>
    <property type="evidence" value="ECO:0007669"/>
    <property type="project" value="InterPro"/>
</dbReference>
<dbReference type="GO" id="GO:0006412">
    <property type="term" value="P:translation"/>
    <property type="evidence" value="ECO:0007669"/>
    <property type="project" value="UniProtKB-UniRule"/>
</dbReference>
<dbReference type="FunFam" id="1.10.287.1480:FF:000001">
    <property type="entry name" value="30S ribosomal protein S14"/>
    <property type="match status" value="1"/>
</dbReference>
<dbReference type="Gene3D" id="1.10.287.1480">
    <property type="match status" value="1"/>
</dbReference>
<dbReference type="HAMAP" id="MF_00537">
    <property type="entry name" value="Ribosomal_uS14_1"/>
    <property type="match status" value="1"/>
</dbReference>
<dbReference type="InterPro" id="IPR001209">
    <property type="entry name" value="Ribosomal_uS14"/>
</dbReference>
<dbReference type="InterPro" id="IPR023036">
    <property type="entry name" value="Ribosomal_uS14_bac/plastid"/>
</dbReference>
<dbReference type="NCBIfam" id="NF006477">
    <property type="entry name" value="PRK08881.1"/>
    <property type="match status" value="1"/>
</dbReference>
<dbReference type="PANTHER" id="PTHR19836">
    <property type="entry name" value="30S RIBOSOMAL PROTEIN S14"/>
    <property type="match status" value="1"/>
</dbReference>
<dbReference type="PANTHER" id="PTHR19836:SF23">
    <property type="entry name" value="SMALL RIBOSOMAL SUBUNIT PROTEIN US14A"/>
    <property type="match status" value="1"/>
</dbReference>
<dbReference type="Pfam" id="PF00253">
    <property type="entry name" value="Ribosomal_S14"/>
    <property type="match status" value="1"/>
</dbReference>
<dbReference type="SUPFAM" id="SSF57716">
    <property type="entry name" value="Glucocorticoid receptor-like (DNA-binding domain)"/>
    <property type="match status" value="1"/>
</dbReference>
<protein>
    <recommendedName>
        <fullName evidence="1">Small ribosomal subunit protein uS14A</fullName>
    </recommendedName>
    <alternativeName>
        <fullName evidence="2">30S ribosomal protein S14</fullName>
    </alternativeName>
</protein>
<gene>
    <name evidence="1" type="primary">rpsN</name>
    <name type="ordered locus">Sare_2905</name>
</gene>
<keyword id="KW-0687">Ribonucleoprotein</keyword>
<keyword id="KW-0689">Ribosomal protein</keyword>
<keyword id="KW-0694">RNA-binding</keyword>
<keyword id="KW-0699">rRNA-binding</keyword>
<sequence length="101" mass="11738">MARKSLSSRQARREGLVARYADRRAELKRLVTHPDTDLSARDDAVRRLSRLPRDSSRVRLRNRDVIDGRPRGVLSRFGLSRVRFREMALRGELPGVRKASW</sequence>
<name>RS14_SALAI</name>
<proteinExistence type="inferred from homology"/>